<feature type="chain" id="PRO_0000197251" description="Metallothionein-3">
    <location>
        <begin position="1"/>
        <end position="68"/>
    </location>
</feature>
<feature type="region of interest" description="Beta">
    <location>
        <begin position="1"/>
        <end position="30"/>
    </location>
</feature>
<feature type="region of interest" description="Alpha">
    <location>
        <begin position="31"/>
        <end position="68"/>
    </location>
</feature>
<feature type="binding site" evidence="2">
    <location>
        <position position="6"/>
    </location>
    <ligand>
        <name>a divalent metal cation</name>
        <dbReference type="ChEBI" id="CHEBI:60240"/>
        <label>1</label>
        <note>in cluster B</note>
    </ligand>
</feature>
<feature type="binding site" evidence="2">
    <location>
        <position position="8"/>
    </location>
    <ligand>
        <name>a divalent metal cation</name>
        <dbReference type="ChEBI" id="CHEBI:60240"/>
        <label>1</label>
        <note>in cluster B</note>
    </ligand>
</feature>
<feature type="binding site" evidence="2">
    <location>
        <position position="8"/>
    </location>
    <ligand>
        <name>a divalent metal cation</name>
        <dbReference type="ChEBI" id="CHEBI:60240"/>
        <label>2</label>
        <note>in cluster B</note>
    </ligand>
</feature>
<feature type="binding site" evidence="2">
    <location>
        <position position="14"/>
    </location>
    <ligand>
        <name>a divalent metal cation</name>
        <dbReference type="ChEBI" id="CHEBI:60240"/>
        <label>2</label>
        <note>in cluster B</note>
    </ligand>
</feature>
<feature type="binding site" evidence="2">
    <location>
        <position position="16"/>
    </location>
    <ligand>
        <name>a divalent metal cation</name>
        <dbReference type="ChEBI" id="CHEBI:60240"/>
        <label>2</label>
        <note>in cluster B</note>
    </ligand>
</feature>
<feature type="binding site" evidence="2">
    <location>
        <position position="16"/>
    </location>
    <ligand>
        <name>a divalent metal cation</name>
        <dbReference type="ChEBI" id="CHEBI:60240"/>
        <label>3</label>
        <note>in cluster B</note>
    </ligand>
</feature>
<feature type="binding site" evidence="2">
    <location>
        <position position="20"/>
    </location>
    <ligand>
        <name>a divalent metal cation</name>
        <dbReference type="ChEBI" id="CHEBI:60240"/>
        <label>3</label>
        <note>in cluster B</note>
    </ligand>
</feature>
<feature type="binding site" evidence="2">
    <location>
        <position position="22"/>
    </location>
    <ligand>
        <name>a divalent metal cation</name>
        <dbReference type="ChEBI" id="CHEBI:60240"/>
        <label>1</label>
        <note>in cluster B</note>
    </ligand>
</feature>
<feature type="binding site" evidence="2">
    <location>
        <position position="25"/>
    </location>
    <ligand>
        <name>a divalent metal cation</name>
        <dbReference type="ChEBI" id="CHEBI:60240"/>
        <label>1</label>
        <note>in cluster B</note>
    </ligand>
</feature>
<feature type="binding site" evidence="2">
    <location>
        <position position="25"/>
    </location>
    <ligand>
        <name>a divalent metal cation</name>
        <dbReference type="ChEBI" id="CHEBI:60240"/>
        <label>3</label>
        <note>in cluster B</note>
    </ligand>
</feature>
<feature type="binding site" evidence="2">
    <location>
        <position position="27"/>
    </location>
    <ligand>
        <name>a divalent metal cation</name>
        <dbReference type="ChEBI" id="CHEBI:60240"/>
        <label>2</label>
        <note>in cluster B</note>
    </ligand>
</feature>
<feature type="binding site" evidence="2">
    <location>
        <position position="30"/>
    </location>
    <ligand>
        <name>a divalent metal cation</name>
        <dbReference type="ChEBI" id="CHEBI:60240"/>
        <label>3</label>
        <note>in cluster B</note>
    </ligand>
</feature>
<feature type="binding site" evidence="4 6">
    <location>
        <position position="34"/>
    </location>
    <ligand>
        <name>a divalent metal cation</name>
        <dbReference type="ChEBI" id="CHEBI:60240"/>
        <label>4</label>
        <note>in cluster A</note>
    </ligand>
</feature>
<feature type="binding site" evidence="4 6">
    <location>
        <position position="35"/>
    </location>
    <ligand>
        <name>a divalent metal cation</name>
        <dbReference type="ChEBI" id="CHEBI:60240"/>
        <label>4</label>
        <note>in cluster A</note>
    </ligand>
</feature>
<feature type="binding site" evidence="4 6">
    <location>
        <position position="35"/>
    </location>
    <ligand>
        <name>a divalent metal cation</name>
        <dbReference type="ChEBI" id="CHEBI:60240"/>
        <label>5</label>
        <note>in cluster A</note>
    </ligand>
</feature>
<feature type="binding site" evidence="4 6">
    <location>
        <position position="37"/>
    </location>
    <ligand>
        <name>a divalent metal cation</name>
        <dbReference type="ChEBI" id="CHEBI:60240"/>
        <label>5</label>
        <note>in cluster A</note>
    </ligand>
</feature>
<feature type="binding site" evidence="4 6">
    <location>
        <position position="38"/>
    </location>
    <ligand>
        <name>a divalent metal cation</name>
        <dbReference type="ChEBI" id="CHEBI:60240"/>
        <label>5</label>
        <note>in cluster A</note>
    </ligand>
</feature>
<feature type="binding site" evidence="4 6">
    <location>
        <position position="38"/>
    </location>
    <ligand>
        <name>a divalent metal cation</name>
        <dbReference type="ChEBI" id="CHEBI:60240"/>
        <label>6</label>
        <note>in cluster A</note>
    </ligand>
</feature>
<feature type="binding site" evidence="4 6">
    <location>
        <position position="42"/>
    </location>
    <ligand>
        <name>a divalent metal cation</name>
        <dbReference type="ChEBI" id="CHEBI:60240"/>
        <label>6</label>
        <note>in cluster A</note>
    </ligand>
</feature>
<feature type="binding site" evidence="4 6">
    <location>
        <position position="45"/>
    </location>
    <ligand>
        <name>a divalent metal cation</name>
        <dbReference type="ChEBI" id="CHEBI:60240"/>
        <label>4</label>
        <note>in cluster A</note>
    </ligand>
</feature>
<feature type="binding site" evidence="4 6">
    <location>
        <position position="45"/>
    </location>
    <ligand>
        <name>a divalent metal cation</name>
        <dbReference type="ChEBI" id="CHEBI:60240"/>
        <label>6</label>
        <note>in cluster A</note>
    </ligand>
</feature>
<feature type="binding site" evidence="4 6">
    <location>
        <position position="49"/>
    </location>
    <ligand>
        <name>a divalent metal cation</name>
        <dbReference type="ChEBI" id="CHEBI:60240"/>
        <label>4</label>
        <note>in cluster A</note>
    </ligand>
</feature>
<feature type="binding site" evidence="4 6">
    <location>
        <position position="51"/>
    </location>
    <ligand>
        <name>a divalent metal cation</name>
        <dbReference type="ChEBI" id="CHEBI:60240"/>
        <label>5</label>
        <note>in cluster A</note>
    </ligand>
</feature>
<feature type="binding site" evidence="4 6">
    <location>
        <position position="51"/>
    </location>
    <ligand>
        <name>a divalent metal cation</name>
        <dbReference type="ChEBI" id="CHEBI:60240"/>
        <label>7</label>
        <note>in cluster A</note>
    </ligand>
</feature>
<feature type="binding site" evidence="4 6">
    <location>
        <position position="64"/>
    </location>
    <ligand>
        <name>a divalent metal cation</name>
        <dbReference type="ChEBI" id="CHEBI:60240"/>
        <label>7</label>
        <note>in cluster A</note>
    </ligand>
</feature>
<feature type="binding site" evidence="4 6">
    <location>
        <position position="66"/>
    </location>
    <ligand>
        <name>a divalent metal cation</name>
        <dbReference type="ChEBI" id="CHEBI:60240"/>
        <label>7</label>
        <note>in cluster A</note>
    </ligand>
</feature>
<feature type="binding site" evidence="4 6">
    <location>
        <position position="67"/>
    </location>
    <ligand>
        <name>a divalent metal cation</name>
        <dbReference type="ChEBI" id="CHEBI:60240"/>
        <label>6</label>
        <note>in cluster A</note>
    </ligand>
</feature>
<feature type="binding site" evidence="4 6">
    <location>
        <position position="67"/>
    </location>
    <ligand>
        <name>a divalent metal cation</name>
        <dbReference type="ChEBI" id="CHEBI:60240"/>
        <label>7</label>
        <note>in cluster A</note>
    </ligand>
</feature>
<feature type="modified residue" description="N-acetylmethionine" evidence="3">
    <location>
        <position position="1"/>
    </location>
</feature>
<feature type="modified residue" description="Phosphoserine" evidence="7">
    <location>
        <position position="33"/>
    </location>
</feature>
<feature type="strand" evidence="8">
    <location>
        <begin position="36"/>
        <end position="38"/>
    </location>
</feature>
<feature type="turn" evidence="8">
    <location>
        <begin position="43"/>
        <end position="48"/>
    </location>
</feature>
<accession>P28184</accession>
<dbReference type="EMBL" id="M93310">
    <property type="protein sequence ID" value="AAA39529.1"/>
    <property type="molecule type" value="Genomic_DNA"/>
</dbReference>
<dbReference type="EMBL" id="S72046">
    <property type="protein sequence ID" value="AAB31397.1"/>
    <property type="molecule type" value="Genomic_DNA"/>
</dbReference>
<dbReference type="EMBL" id="BC059725">
    <property type="protein sequence ID" value="AAH59725.1"/>
    <property type="molecule type" value="mRNA"/>
</dbReference>
<dbReference type="CCDS" id="CCDS40436.1"/>
<dbReference type="PIR" id="A46034">
    <property type="entry name" value="A46034"/>
</dbReference>
<dbReference type="RefSeq" id="NP_038631.1">
    <property type="nucleotide sequence ID" value="NM_013603.2"/>
</dbReference>
<dbReference type="PDB" id="1JI9">
    <property type="method" value="NMR"/>
    <property type="chains" value="A=32-68"/>
</dbReference>
<dbReference type="PDBsum" id="1JI9"/>
<dbReference type="SMR" id="P28184"/>
<dbReference type="BioGRID" id="201581">
    <property type="interactions" value="7"/>
</dbReference>
<dbReference type="CORUM" id="P28184"/>
<dbReference type="FunCoup" id="P28184">
    <property type="interactions" value="17"/>
</dbReference>
<dbReference type="STRING" id="10090.ENSMUSP00000034211"/>
<dbReference type="iPTMnet" id="P28184"/>
<dbReference type="PhosphoSitePlus" id="P28184"/>
<dbReference type="SwissPalm" id="P28184"/>
<dbReference type="PaxDb" id="10090-ENSMUSP00000034211"/>
<dbReference type="PeptideAtlas" id="P28184"/>
<dbReference type="ProteomicsDB" id="290106"/>
<dbReference type="Ensembl" id="ENSMUST00000034211.10">
    <property type="protein sequence ID" value="ENSMUSP00000034211.9"/>
    <property type="gene ID" value="ENSMUSG00000031760.10"/>
</dbReference>
<dbReference type="GeneID" id="17751"/>
<dbReference type="KEGG" id="mmu:17751"/>
<dbReference type="UCSC" id="uc009mvu.2">
    <property type="organism name" value="mouse"/>
</dbReference>
<dbReference type="AGR" id="MGI:97173"/>
<dbReference type="CTD" id="4504"/>
<dbReference type="MGI" id="MGI:97173">
    <property type="gene designation" value="Mt3"/>
</dbReference>
<dbReference type="VEuPathDB" id="HostDB:ENSMUSG00000031760"/>
<dbReference type="eggNOG" id="KOG4738">
    <property type="taxonomic scope" value="Eukaryota"/>
</dbReference>
<dbReference type="GeneTree" id="ENSGT00940000168571"/>
<dbReference type="HOGENOM" id="CLU_171204_2_0_1"/>
<dbReference type="InParanoid" id="P28184"/>
<dbReference type="OMA" id="CEDSCKC"/>
<dbReference type="Reactome" id="R-MMU-5661231">
    <property type="pathway name" value="Metallothioneins bind metals"/>
</dbReference>
<dbReference type="BioGRID-ORCS" id="17751">
    <property type="hits" value="2 hits in 78 CRISPR screens"/>
</dbReference>
<dbReference type="EvolutionaryTrace" id="P28184"/>
<dbReference type="PRO" id="PR:P28184"/>
<dbReference type="Proteomes" id="UP000000589">
    <property type="component" value="Chromosome 8"/>
</dbReference>
<dbReference type="RNAct" id="P28184">
    <property type="molecule type" value="protein"/>
</dbReference>
<dbReference type="Bgee" id="ENSMUSG00000031760">
    <property type="expression patterns" value="Expressed in choroid plexus of fourth ventricle and 213 other cell types or tissues"/>
</dbReference>
<dbReference type="ExpressionAtlas" id="P28184">
    <property type="expression patterns" value="baseline and differential"/>
</dbReference>
<dbReference type="GO" id="GO:0097450">
    <property type="term" value="C:astrocyte end-foot"/>
    <property type="evidence" value="ECO:0007669"/>
    <property type="project" value="Ensembl"/>
</dbReference>
<dbReference type="GO" id="GO:0030424">
    <property type="term" value="C:axon"/>
    <property type="evidence" value="ECO:0007669"/>
    <property type="project" value="Ensembl"/>
</dbReference>
<dbReference type="GO" id="GO:0005829">
    <property type="term" value="C:cytosol"/>
    <property type="evidence" value="ECO:0000304"/>
    <property type="project" value="Reactome"/>
</dbReference>
<dbReference type="GO" id="GO:0043197">
    <property type="term" value="C:dendritic spine"/>
    <property type="evidence" value="ECO:0007669"/>
    <property type="project" value="Ensembl"/>
</dbReference>
<dbReference type="GO" id="GO:0005615">
    <property type="term" value="C:extracellular space"/>
    <property type="evidence" value="ECO:0007669"/>
    <property type="project" value="Ensembl"/>
</dbReference>
<dbReference type="GO" id="GO:0016234">
    <property type="term" value="C:inclusion body"/>
    <property type="evidence" value="ECO:0000250"/>
    <property type="project" value="UniProtKB"/>
</dbReference>
<dbReference type="GO" id="GO:0005874">
    <property type="term" value="C:microtubule"/>
    <property type="evidence" value="ECO:0007669"/>
    <property type="project" value="Ensembl"/>
</dbReference>
<dbReference type="GO" id="GO:0005741">
    <property type="term" value="C:mitochondrial outer membrane"/>
    <property type="evidence" value="ECO:0007669"/>
    <property type="project" value="Ensembl"/>
</dbReference>
<dbReference type="GO" id="GO:0005634">
    <property type="term" value="C:nucleus"/>
    <property type="evidence" value="ECO:0000250"/>
    <property type="project" value="UniProtKB"/>
</dbReference>
<dbReference type="GO" id="GO:0048471">
    <property type="term" value="C:perinuclear region of cytoplasm"/>
    <property type="evidence" value="ECO:0000250"/>
    <property type="project" value="UniProtKB"/>
</dbReference>
<dbReference type="GO" id="GO:0005840">
    <property type="term" value="C:ribosome"/>
    <property type="evidence" value="ECO:0007669"/>
    <property type="project" value="Ensembl"/>
</dbReference>
<dbReference type="GO" id="GO:0008021">
    <property type="term" value="C:synaptic vesicle"/>
    <property type="evidence" value="ECO:0000314"/>
    <property type="project" value="UniProtKB"/>
</dbReference>
<dbReference type="GO" id="GO:0046870">
    <property type="term" value="F:cadmium ion binding"/>
    <property type="evidence" value="ECO:0000250"/>
    <property type="project" value="UniProtKB"/>
</dbReference>
<dbReference type="GO" id="GO:0005507">
    <property type="term" value="F:copper ion binding"/>
    <property type="evidence" value="ECO:0000250"/>
    <property type="project" value="UniProtKB"/>
</dbReference>
<dbReference type="GO" id="GO:0046872">
    <property type="term" value="F:metal ion binding"/>
    <property type="evidence" value="ECO:0000314"/>
    <property type="project" value="MGI"/>
</dbReference>
<dbReference type="GO" id="GO:0140487">
    <property type="term" value="F:metal ion sequestering activity"/>
    <property type="evidence" value="ECO:0000315"/>
    <property type="project" value="UniProtKB"/>
</dbReference>
<dbReference type="GO" id="GO:0030295">
    <property type="term" value="F:protein kinase activator activity"/>
    <property type="evidence" value="ECO:0000250"/>
    <property type="project" value="UniProtKB"/>
</dbReference>
<dbReference type="GO" id="GO:0008270">
    <property type="term" value="F:zinc ion binding"/>
    <property type="evidence" value="ECO:0000314"/>
    <property type="project" value="UniProtKB"/>
</dbReference>
<dbReference type="GO" id="GO:0032148">
    <property type="term" value="P:activation of protein kinase B activity"/>
    <property type="evidence" value="ECO:0000250"/>
    <property type="project" value="UniProtKB"/>
</dbReference>
<dbReference type="GO" id="GO:1990748">
    <property type="term" value="P:cellular detoxification"/>
    <property type="evidence" value="ECO:0000250"/>
    <property type="project" value="UniProtKB"/>
</dbReference>
<dbReference type="GO" id="GO:0071456">
    <property type="term" value="P:cellular response to hypoxia"/>
    <property type="evidence" value="ECO:0007669"/>
    <property type="project" value="Ensembl"/>
</dbReference>
<dbReference type="GO" id="GO:0034614">
    <property type="term" value="P:cellular response to reactive oxygen species"/>
    <property type="evidence" value="ECO:0000250"/>
    <property type="project" value="UniProtKB"/>
</dbReference>
<dbReference type="GO" id="GO:0071585">
    <property type="term" value="P:detoxification of cadmium ion"/>
    <property type="evidence" value="ECO:0000315"/>
    <property type="project" value="GO_Central"/>
</dbReference>
<dbReference type="GO" id="GO:0006112">
    <property type="term" value="P:energy reserve metabolic process"/>
    <property type="evidence" value="ECO:0000315"/>
    <property type="project" value="UniProtKB"/>
</dbReference>
<dbReference type="GO" id="GO:0030003">
    <property type="term" value="P:intracellular monoatomic cation homeostasis"/>
    <property type="evidence" value="ECO:0000314"/>
    <property type="project" value="MGI"/>
</dbReference>
<dbReference type="GO" id="GO:0006882">
    <property type="term" value="P:intracellular zinc ion homeostasis"/>
    <property type="evidence" value="ECO:0000314"/>
    <property type="project" value="UniProtKB"/>
</dbReference>
<dbReference type="GO" id="GO:0033210">
    <property type="term" value="P:leptin-mediated signaling pathway"/>
    <property type="evidence" value="ECO:0000315"/>
    <property type="project" value="UniProtKB"/>
</dbReference>
<dbReference type="GO" id="GO:0043066">
    <property type="term" value="P:negative regulation of apoptotic process"/>
    <property type="evidence" value="ECO:0000315"/>
    <property type="project" value="UniProtKB"/>
</dbReference>
<dbReference type="GO" id="GO:0030517">
    <property type="term" value="P:negative regulation of axon extension"/>
    <property type="evidence" value="ECO:0000250"/>
    <property type="project" value="UniProtKB"/>
</dbReference>
<dbReference type="GO" id="GO:0030308">
    <property type="term" value="P:negative regulation of cell growth"/>
    <property type="evidence" value="ECO:0000250"/>
    <property type="project" value="UniProtKB"/>
</dbReference>
<dbReference type="GO" id="GO:2000296">
    <property type="term" value="P:negative regulation of hydrogen peroxide catabolic process"/>
    <property type="evidence" value="ECO:0007669"/>
    <property type="project" value="Ensembl"/>
</dbReference>
<dbReference type="GO" id="GO:0050768">
    <property type="term" value="P:negative regulation of neurogenesis"/>
    <property type="evidence" value="ECO:0000314"/>
    <property type="project" value="MGI"/>
</dbReference>
<dbReference type="GO" id="GO:0043524">
    <property type="term" value="P:negative regulation of neuron apoptotic process"/>
    <property type="evidence" value="ECO:0000314"/>
    <property type="project" value="UniProtKB"/>
</dbReference>
<dbReference type="GO" id="GO:0051354">
    <property type="term" value="P:negative regulation of oxidoreductase activity"/>
    <property type="evidence" value="ECO:0000250"/>
    <property type="project" value="UniProtKB"/>
</dbReference>
<dbReference type="GO" id="GO:0045893">
    <property type="term" value="P:positive regulation of DNA-templated transcription"/>
    <property type="evidence" value="ECO:0000315"/>
    <property type="project" value="UniProtKB"/>
</dbReference>
<dbReference type="GO" id="GO:0070374">
    <property type="term" value="P:positive regulation of ERK1 and ERK2 cascade"/>
    <property type="evidence" value="ECO:0000315"/>
    <property type="project" value="UniProtKB"/>
</dbReference>
<dbReference type="GO" id="GO:0010628">
    <property type="term" value="P:positive regulation of gene expression"/>
    <property type="evidence" value="ECO:0007669"/>
    <property type="project" value="Ensembl"/>
</dbReference>
<dbReference type="GO" id="GO:2000376">
    <property type="term" value="P:positive regulation of oxygen metabolic process"/>
    <property type="evidence" value="ECO:0000315"/>
    <property type="project" value="UniProtKB"/>
</dbReference>
<dbReference type="GO" id="GO:0001934">
    <property type="term" value="P:positive regulation of protein phosphorylation"/>
    <property type="evidence" value="ECO:0000250"/>
    <property type="project" value="UniProtKB"/>
</dbReference>
<dbReference type="GO" id="GO:0030949">
    <property type="term" value="P:positive regulation of vascular endothelial growth factor receptor signaling pathway"/>
    <property type="evidence" value="ECO:0000250"/>
    <property type="project" value="UniProtKB"/>
</dbReference>
<dbReference type="GO" id="GO:0050821">
    <property type="term" value="P:protein stabilization"/>
    <property type="evidence" value="ECO:0000250"/>
    <property type="project" value="UniProtKB"/>
</dbReference>
<dbReference type="GO" id="GO:0032095">
    <property type="term" value="P:regulation of response to food"/>
    <property type="evidence" value="ECO:0000315"/>
    <property type="project" value="UniProtKB"/>
</dbReference>
<dbReference type="GO" id="GO:0019430">
    <property type="term" value="P:removal of superoxide radicals"/>
    <property type="evidence" value="ECO:0000250"/>
    <property type="project" value="UniProtKB"/>
</dbReference>
<dbReference type="GO" id="GO:0001666">
    <property type="term" value="P:response to hypoxia"/>
    <property type="evidence" value="ECO:0000250"/>
    <property type="project" value="UniProtKB"/>
</dbReference>
<dbReference type="GO" id="GO:0006979">
    <property type="term" value="P:response to oxidative stress"/>
    <property type="evidence" value="ECO:0000315"/>
    <property type="project" value="UniProtKB"/>
</dbReference>
<dbReference type="GO" id="GO:0006829">
    <property type="term" value="P:zinc ion transport"/>
    <property type="evidence" value="ECO:0000314"/>
    <property type="project" value="UniProtKB"/>
</dbReference>
<dbReference type="FunFam" id="4.10.10.10:FF:000001">
    <property type="entry name" value="Metallothionein"/>
    <property type="match status" value="1"/>
</dbReference>
<dbReference type="Gene3D" id="4.10.10.10">
    <property type="entry name" value="Metallothionein Isoform II"/>
    <property type="match status" value="1"/>
</dbReference>
<dbReference type="InterPro" id="IPR017854">
    <property type="entry name" value="Metalthion_dom_sf"/>
</dbReference>
<dbReference type="InterPro" id="IPR023587">
    <property type="entry name" value="Metalthion_dom_sf_vert"/>
</dbReference>
<dbReference type="InterPro" id="IPR000006">
    <property type="entry name" value="Metalthion_vert"/>
</dbReference>
<dbReference type="InterPro" id="IPR018064">
    <property type="entry name" value="Metalthion_vert_metal_BS"/>
</dbReference>
<dbReference type="PANTHER" id="PTHR23299">
    <property type="entry name" value="METALLOTHIONEIN"/>
    <property type="match status" value="1"/>
</dbReference>
<dbReference type="PANTHER" id="PTHR23299:SF18">
    <property type="entry name" value="METALLOTHIONEIN-3"/>
    <property type="match status" value="1"/>
</dbReference>
<dbReference type="Pfam" id="PF00131">
    <property type="entry name" value="Metallothio"/>
    <property type="match status" value="1"/>
</dbReference>
<dbReference type="PRINTS" id="PR00860">
    <property type="entry name" value="MTVERTEBRATE"/>
</dbReference>
<dbReference type="SUPFAM" id="SSF57868">
    <property type="entry name" value="Metallothionein"/>
    <property type="match status" value="1"/>
</dbReference>
<dbReference type="PROSITE" id="PS00203">
    <property type="entry name" value="METALLOTHIONEIN_VRT"/>
    <property type="match status" value="1"/>
</dbReference>
<protein>
    <recommendedName>
        <fullName>Metallothionein-3</fullName>
        <shortName>MT-3</shortName>
    </recommendedName>
    <alternativeName>
        <fullName>Growth inhibitory factor</fullName>
        <shortName>GIF</shortName>
    </alternativeName>
    <alternativeName>
        <fullName>Metallothionein-III</fullName>
        <shortName>MT-III</shortName>
    </alternativeName>
</protein>
<reference key="1">
    <citation type="journal article" date="1992" name="Proc. Natl. Acad. Sci. U.S.A.">
        <title>MT-III, a brain-specific member of the metallothionein gene family.</title>
        <authorList>
            <person name="Palmiter R.D."/>
            <person name="Findley S.D."/>
            <person name="Whitmore T.E."/>
            <person name="Durnam D.M."/>
        </authorList>
    </citation>
    <scope>NUCLEOTIDE SEQUENCE [GENOMIC DNA]</scope>
    <source>
        <tissue>Brain</tissue>
    </source>
</reference>
<reference key="2">
    <citation type="journal article" date="1994" name="Gene">
        <title>Structures of the human and mouse growth inhibitory factor-encoding genes.</title>
        <authorList>
            <person name="Naruse S."/>
            <person name="Igarashi S."/>
            <person name="Furuya T."/>
            <person name="Kobayashi H."/>
            <person name="Miyatake T."/>
            <person name="Tsuji S."/>
        </authorList>
    </citation>
    <scope>NUCLEOTIDE SEQUENCE [GENOMIC DNA]</scope>
</reference>
<reference key="3">
    <citation type="journal article" date="2004" name="Genome Res.">
        <title>The status, quality, and expansion of the NIH full-length cDNA project: the Mammalian Gene Collection (MGC).</title>
        <authorList>
            <consortium name="The MGC Project Team"/>
        </authorList>
    </citation>
    <scope>NUCLEOTIDE SEQUENCE [LARGE SCALE MRNA]</scope>
    <source>
        <tissue>Brain</tissue>
    </source>
</reference>
<reference key="4">
    <citation type="journal article" date="2010" name="Cell">
        <title>A tissue-specific atlas of mouse protein phosphorylation and expression.</title>
        <authorList>
            <person name="Huttlin E.L."/>
            <person name="Jedrychowski M.P."/>
            <person name="Elias J.E."/>
            <person name="Goswami T."/>
            <person name="Rad R."/>
            <person name="Beausoleil S.A."/>
            <person name="Villen J."/>
            <person name="Haas W."/>
            <person name="Sowa M.E."/>
            <person name="Gygi S.P."/>
        </authorList>
    </citation>
    <scope>PHOSPHORYLATION [LARGE SCALE ANALYSIS] AT SER-33</scope>
    <scope>IDENTIFICATION BY MASS SPECTROMETRY [LARGE SCALE ANALYSIS]</scope>
    <source>
        <tissue>Brain</tissue>
    </source>
</reference>
<reference evidence="6" key="5">
    <citation type="journal article" date="2001" name="Biochemistry">
        <title>Three-dimensional structure and dynamics of a brain specific growth inhibitory factor: metallothionein-3.</title>
        <authorList>
            <person name="Oz G."/>
            <person name="Zangger K."/>
            <person name="Armitage I.M."/>
        </authorList>
    </citation>
    <scope>STRUCTURE BY NMR OF 32-68 IN COMPLEX WITH CADMIUM IONS</scope>
</reference>
<proteinExistence type="evidence at protein level"/>
<gene>
    <name type="primary">Mt3</name>
</gene>
<comment type="function">
    <text evidence="1">Binds heavy metals. Contains three zinc and three copper atoms per polypeptide chain and only a negligible amount of cadmium. Inhibits survival and neurite formation of cortical neurons in vitro (By similarity).</text>
</comment>
<comment type="tissue specificity">
    <text>Brain.</text>
</comment>
<comment type="similarity">
    <text evidence="5">Belongs to the metallothionein superfamily. Type 1 family.</text>
</comment>
<keyword id="KW-0002">3D-structure</keyword>
<keyword id="KW-0007">Acetylation</keyword>
<keyword id="KW-0186">Copper</keyword>
<keyword id="KW-0479">Metal-binding</keyword>
<keyword id="KW-0480">Metal-thiolate cluster</keyword>
<keyword id="KW-0597">Phosphoprotein</keyword>
<keyword id="KW-1185">Reference proteome</keyword>
<keyword id="KW-0862">Zinc</keyword>
<name>MT3_MOUSE</name>
<sequence length="68" mass="7009">MDPETCPCPTGGSCTCSDKCKCKGCKCTNCKKSCCSCCPAGCEKCAKDCVCKGEEGAKAEAEKCSCCQ</sequence>
<organism>
    <name type="scientific">Mus musculus</name>
    <name type="common">Mouse</name>
    <dbReference type="NCBI Taxonomy" id="10090"/>
    <lineage>
        <taxon>Eukaryota</taxon>
        <taxon>Metazoa</taxon>
        <taxon>Chordata</taxon>
        <taxon>Craniata</taxon>
        <taxon>Vertebrata</taxon>
        <taxon>Euteleostomi</taxon>
        <taxon>Mammalia</taxon>
        <taxon>Eutheria</taxon>
        <taxon>Euarchontoglires</taxon>
        <taxon>Glires</taxon>
        <taxon>Rodentia</taxon>
        <taxon>Myomorpha</taxon>
        <taxon>Muroidea</taxon>
        <taxon>Muridae</taxon>
        <taxon>Murinae</taxon>
        <taxon>Mus</taxon>
        <taxon>Mus</taxon>
    </lineage>
</organism>
<evidence type="ECO:0000250" key="1"/>
<evidence type="ECO:0000250" key="2">
    <source>
        <dbReference type="UniProtKB" id="P02795"/>
    </source>
</evidence>
<evidence type="ECO:0000250" key="3">
    <source>
        <dbReference type="UniProtKB" id="P37359"/>
    </source>
</evidence>
<evidence type="ECO:0000269" key="4">
    <source>
    </source>
</evidence>
<evidence type="ECO:0000305" key="5"/>
<evidence type="ECO:0007744" key="6">
    <source>
        <dbReference type="PDB" id="1JI9"/>
    </source>
</evidence>
<evidence type="ECO:0007744" key="7">
    <source>
    </source>
</evidence>
<evidence type="ECO:0007829" key="8">
    <source>
        <dbReference type="PDB" id="1JI9"/>
    </source>
</evidence>